<keyword id="KW-0028">Amino-acid biosynthesis</keyword>
<keyword id="KW-0057">Aromatic amino acid biosynthesis</keyword>
<keyword id="KW-0521">NADP</keyword>
<keyword id="KW-0560">Oxidoreductase</keyword>
<keyword id="KW-1185">Reference proteome</keyword>
<comment type="function">
    <text evidence="1">Involved in the biosynthesis of the chorismate, which leads to the biosynthesis of aromatic amino acids. Catalyzes the reversible NADPH linked reduction of 3-dehydroshikimate (DHSA) to yield shikimate (SA).</text>
</comment>
<comment type="catalytic activity">
    <reaction evidence="1">
        <text>shikimate + NADP(+) = 3-dehydroshikimate + NADPH + H(+)</text>
        <dbReference type="Rhea" id="RHEA:17737"/>
        <dbReference type="ChEBI" id="CHEBI:15378"/>
        <dbReference type="ChEBI" id="CHEBI:16630"/>
        <dbReference type="ChEBI" id="CHEBI:36208"/>
        <dbReference type="ChEBI" id="CHEBI:57783"/>
        <dbReference type="ChEBI" id="CHEBI:58349"/>
        <dbReference type="EC" id="1.1.1.25"/>
    </reaction>
</comment>
<comment type="pathway">
    <text evidence="1">Metabolic intermediate biosynthesis; chorismate biosynthesis; chorismate from D-erythrose 4-phosphate and phosphoenolpyruvate: step 4/7.</text>
</comment>
<comment type="subunit">
    <text evidence="1">Homodimer.</text>
</comment>
<comment type="similarity">
    <text evidence="1">Belongs to the shikimate dehydrogenase family.</text>
</comment>
<dbReference type="EC" id="1.1.1.25" evidence="1"/>
<dbReference type="EMBL" id="CP000851">
    <property type="protein sequence ID" value="ABV85369.1"/>
    <property type="molecule type" value="Genomic_DNA"/>
</dbReference>
<dbReference type="RefSeq" id="WP_012153315.1">
    <property type="nucleotide sequence ID" value="NC_009901.1"/>
</dbReference>
<dbReference type="SMR" id="A8GYI2"/>
<dbReference type="STRING" id="398579.Spea_0040"/>
<dbReference type="KEGG" id="spl:Spea_0040"/>
<dbReference type="eggNOG" id="COG0169">
    <property type="taxonomic scope" value="Bacteria"/>
</dbReference>
<dbReference type="HOGENOM" id="CLU_044063_2_1_6"/>
<dbReference type="OrthoDB" id="9776868at2"/>
<dbReference type="UniPathway" id="UPA00053">
    <property type="reaction ID" value="UER00087"/>
</dbReference>
<dbReference type="Proteomes" id="UP000002608">
    <property type="component" value="Chromosome"/>
</dbReference>
<dbReference type="GO" id="GO:0005829">
    <property type="term" value="C:cytosol"/>
    <property type="evidence" value="ECO:0007669"/>
    <property type="project" value="TreeGrafter"/>
</dbReference>
<dbReference type="GO" id="GO:0050661">
    <property type="term" value="F:NADP binding"/>
    <property type="evidence" value="ECO:0007669"/>
    <property type="project" value="InterPro"/>
</dbReference>
<dbReference type="GO" id="GO:0004764">
    <property type="term" value="F:shikimate 3-dehydrogenase (NADP+) activity"/>
    <property type="evidence" value="ECO:0007669"/>
    <property type="project" value="UniProtKB-UniRule"/>
</dbReference>
<dbReference type="GO" id="GO:0008652">
    <property type="term" value="P:amino acid biosynthetic process"/>
    <property type="evidence" value="ECO:0007669"/>
    <property type="project" value="UniProtKB-KW"/>
</dbReference>
<dbReference type="GO" id="GO:0009073">
    <property type="term" value="P:aromatic amino acid family biosynthetic process"/>
    <property type="evidence" value="ECO:0007669"/>
    <property type="project" value="UniProtKB-KW"/>
</dbReference>
<dbReference type="GO" id="GO:0009423">
    <property type="term" value="P:chorismate biosynthetic process"/>
    <property type="evidence" value="ECO:0007669"/>
    <property type="project" value="UniProtKB-UniRule"/>
</dbReference>
<dbReference type="GO" id="GO:0019632">
    <property type="term" value="P:shikimate metabolic process"/>
    <property type="evidence" value="ECO:0007669"/>
    <property type="project" value="InterPro"/>
</dbReference>
<dbReference type="CDD" id="cd01065">
    <property type="entry name" value="NAD_bind_Shikimate_DH"/>
    <property type="match status" value="1"/>
</dbReference>
<dbReference type="FunFam" id="3.40.50.10860:FF:000006">
    <property type="entry name" value="Shikimate dehydrogenase (NADP(+))"/>
    <property type="match status" value="1"/>
</dbReference>
<dbReference type="FunFam" id="3.40.50.720:FF:000104">
    <property type="entry name" value="Shikimate dehydrogenase (NADP(+))"/>
    <property type="match status" value="1"/>
</dbReference>
<dbReference type="Gene3D" id="3.40.50.10860">
    <property type="entry name" value="Leucine Dehydrogenase, chain A, domain 1"/>
    <property type="match status" value="1"/>
</dbReference>
<dbReference type="Gene3D" id="3.40.50.720">
    <property type="entry name" value="NAD(P)-binding Rossmann-like Domain"/>
    <property type="match status" value="1"/>
</dbReference>
<dbReference type="HAMAP" id="MF_00222">
    <property type="entry name" value="Shikimate_DH_AroE"/>
    <property type="match status" value="1"/>
</dbReference>
<dbReference type="InterPro" id="IPR046346">
    <property type="entry name" value="Aminoacid_DH-like_N_sf"/>
</dbReference>
<dbReference type="InterPro" id="IPR036291">
    <property type="entry name" value="NAD(P)-bd_dom_sf"/>
</dbReference>
<dbReference type="InterPro" id="IPR041121">
    <property type="entry name" value="SDH_C"/>
</dbReference>
<dbReference type="InterPro" id="IPR011342">
    <property type="entry name" value="Shikimate_DH"/>
</dbReference>
<dbReference type="InterPro" id="IPR013708">
    <property type="entry name" value="Shikimate_DH-bd_N"/>
</dbReference>
<dbReference type="InterPro" id="IPR022893">
    <property type="entry name" value="Shikimate_DH_fam"/>
</dbReference>
<dbReference type="InterPro" id="IPR006151">
    <property type="entry name" value="Shikm_DH/Glu-tRNA_Rdtase"/>
</dbReference>
<dbReference type="NCBIfam" id="TIGR00507">
    <property type="entry name" value="aroE"/>
    <property type="match status" value="1"/>
</dbReference>
<dbReference type="NCBIfam" id="NF001310">
    <property type="entry name" value="PRK00258.1-2"/>
    <property type="match status" value="1"/>
</dbReference>
<dbReference type="PANTHER" id="PTHR21089:SF1">
    <property type="entry name" value="BIFUNCTIONAL 3-DEHYDROQUINATE DEHYDRATASE_SHIKIMATE DEHYDROGENASE, CHLOROPLASTIC"/>
    <property type="match status" value="1"/>
</dbReference>
<dbReference type="PANTHER" id="PTHR21089">
    <property type="entry name" value="SHIKIMATE DEHYDROGENASE"/>
    <property type="match status" value="1"/>
</dbReference>
<dbReference type="Pfam" id="PF18317">
    <property type="entry name" value="SDH_C"/>
    <property type="match status" value="1"/>
</dbReference>
<dbReference type="Pfam" id="PF01488">
    <property type="entry name" value="Shikimate_DH"/>
    <property type="match status" value="1"/>
</dbReference>
<dbReference type="Pfam" id="PF08501">
    <property type="entry name" value="Shikimate_dh_N"/>
    <property type="match status" value="1"/>
</dbReference>
<dbReference type="SUPFAM" id="SSF53223">
    <property type="entry name" value="Aminoacid dehydrogenase-like, N-terminal domain"/>
    <property type="match status" value="1"/>
</dbReference>
<dbReference type="SUPFAM" id="SSF51735">
    <property type="entry name" value="NAD(P)-binding Rossmann-fold domains"/>
    <property type="match status" value="1"/>
</dbReference>
<gene>
    <name evidence="1" type="primary">aroE</name>
    <name type="ordered locus">Spea_0040</name>
</gene>
<proteinExistence type="inferred from homology"/>
<sequence length="271" mass="28680">MTERYAVFGNPIGHSKSPAIHSMFATETAQSLTYEAILAPIDAFEATFKEFVTNKGYGANVTVPFKEQAFALCDELSEQAKLAGAVNTLSVLADGKIRGDNTDGLGLVADLQRNLGSLTGLKVLLVGAGGAARGSVLPLLQAGIAKLSIVNRTQAKAEILAELFSSYGDVVSLPISHTGKSYDVIINSTSSSLSGEVPNISSDSITSQTVCYDMMYGKEPTSFNVWAKAQGAKQTVDGLGMLVGQAAESFNIWRKVRPSVEPVLTQLRAEL</sequence>
<protein>
    <recommendedName>
        <fullName evidence="1">Shikimate dehydrogenase (NADP(+))</fullName>
        <shortName evidence="1">SDH</shortName>
        <ecNumber evidence="1">1.1.1.25</ecNumber>
    </recommendedName>
</protein>
<reference key="1">
    <citation type="submission" date="2007-10" db="EMBL/GenBank/DDBJ databases">
        <title>Complete sequence of Shewanella pealeana ATCC 700345.</title>
        <authorList>
            <consortium name="US DOE Joint Genome Institute"/>
            <person name="Copeland A."/>
            <person name="Lucas S."/>
            <person name="Lapidus A."/>
            <person name="Barry K."/>
            <person name="Glavina del Rio T."/>
            <person name="Dalin E."/>
            <person name="Tice H."/>
            <person name="Pitluck S."/>
            <person name="Chertkov O."/>
            <person name="Brettin T."/>
            <person name="Bruce D."/>
            <person name="Detter J.C."/>
            <person name="Han C."/>
            <person name="Schmutz J."/>
            <person name="Larimer F."/>
            <person name="Land M."/>
            <person name="Hauser L."/>
            <person name="Kyrpides N."/>
            <person name="Kim E."/>
            <person name="Zhao J.-S.Z."/>
            <person name="Manno D."/>
            <person name="Hawari J."/>
            <person name="Richardson P."/>
        </authorList>
    </citation>
    <scope>NUCLEOTIDE SEQUENCE [LARGE SCALE GENOMIC DNA]</scope>
    <source>
        <strain>ATCC 700345 / ANG-SQ1</strain>
    </source>
</reference>
<name>AROE_SHEPA</name>
<organism>
    <name type="scientific">Shewanella pealeana (strain ATCC 700345 / ANG-SQ1)</name>
    <dbReference type="NCBI Taxonomy" id="398579"/>
    <lineage>
        <taxon>Bacteria</taxon>
        <taxon>Pseudomonadati</taxon>
        <taxon>Pseudomonadota</taxon>
        <taxon>Gammaproteobacteria</taxon>
        <taxon>Alteromonadales</taxon>
        <taxon>Shewanellaceae</taxon>
        <taxon>Shewanella</taxon>
    </lineage>
</organism>
<feature type="chain" id="PRO_1000078128" description="Shikimate dehydrogenase (NADP(+))">
    <location>
        <begin position="1"/>
        <end position="271"/>
    </location>
</feature>
<feature type="active site" description="Proton acceptor" evidence="1">
    <location>
        <position position="66"/>
    </location>
</feature>
<feature type="binding site" evidence="1">
    <location>
        <begin position="15"/>
        <end position="17"/>
    </location>
    <ligand>
        <name>shikimate</name>
        <dbReference type="ChEBI" id="CHEBI:36208"/>
    </ligand>
</feature>
<feature type="binding site" evidence="1">
    <location>
        <position position="62"/>
    </location>
    <ligand>
        <name>shikimate</name>
        <dbReference type="ChEBI" id="CHEBI:36208"/>
    </ligand>
</feature>
<feature type="binding site" evidence="1">
    <location>
        <position position="78"/>
    </location>
    <ligand>
        <name>NADP(+)</name>
        <dbReference type="ChEBI" id="CHEBI:58349"/>
    </ligand>
</feature>
<feature type="binding site" evidence="1">
    <location>
        <position position="87"/>
    </location>
    <ligand>
        <name>shikimate</name>
        <dbReference type="ChEBI" id="CHEBI:36208"/>
    </ligand>
</feature>
<feature type="binding site" evidence="1">
    <location>
        <position position="103"/>
    </location>
    <ligand>
        <name>shikimate</name>
        <dbReference type="ChEBI" id="CHEBI:36208"/>
    </ligand>
</feature>
<feature type="binding site" evidence="1">
    <location>
        <begin position="127"/>
        <end position="131"/>
    </location>
    <ligand>
        <name>NADP(+)</name>
        <dbReference type="ChEBI" id="CHEBI:58349"/>
    </ligand>
</feature>
<feature type="binding site" evidence="1">
    <location>
        <begin position="151"/>
        <end position="156"/>
    </location>
    <ligand>
        <name>NADP(+)</name>
        <dbReference type="ChEBI" id="CHEBI:58349"/>
    </ligand>
</feature>
<feature type="binding site" evidence="1">
    <location>
        <position position="214"/>
    </location>
    <ligand>
        <name>NADP(+)</name>
        <dbReference type="ChEBI" id="CHEBI:58349"/>
    </ligand>
</feature>
<feature type="binding site" evidence="1">
    <location>
        <position position="216"/>
    </location>
    <ligand>
        <name>shikimate</name>
        <dbReference type="ChEBI" id="CHEBI:36208"/>
    </ligand>
</feature>
<feature type="binding site" evidence="1">
    <location>
        <position position="238"/>
    </location>
    <ligand>
        <name>NADP(+)</name>
        <dbReference type="ChEBI" id="CHEBI:58349"/>
    </ligand>
</feature>
<accession>A8GYI2</accession>
<evidence type="ECO:0000255" key="1">
    <source>
        <dbReference type="HAMAP-Rule" id="MF_00222"/>
    </source>
</evidence>